<feature type="chain" id="PRO_0000219322" description="Cyclic nucleotide-gated channel alpha-4">
    <location>
        <begin position="1"/>
        <end position="575"/>
    </location>
</feature>
<feature type="topological domain" description="Cytoplasmic" evidence="15">
    <location>
        <begin position="1"/>
        <end position="38"/>
    </location>
</feature>
<feature type="transmembrane region" description="Helical; Name=S1" evidence="2">
    <location>
        <begin position="39"/>
        <end position="60"/>
    </location>
</feature>
<feature type="topological domain" description="Extracellular" evidence="15">
    <location>
        <begin position="61"/>
        <end position="70"/>
    </location>
</feature>
<feature type="transmembrane region" description="Helical; Name=S2" evidence="2">
    <location>
        <begin position="71"/>
        <end position="91"/>
    </location>
</feature>
<feature type="topological domain" description="Cytoplasmic" evidence="15">
    <location>
        <begin position="92"/>
        <end position="116"/>
    </location>
</feature>
<feature type="transmembrane region" description="Helical; Name=S3" evidence="2">
    <location>
        <begin position="117"/>
        <end position="135"/>
    </location>
</feature>
<feature type="topological domain" description="Extracellular" evidence="15">
    <location>
        <begin position="136"/>
        <end position="140"/>
    </location>
</feature>
<feature type="transmembrane region" description="Helical; Name=S4" evidence="2">
    <location>
        <begin position="141"/>
        <end position="159"/>
    </location>
</feature>
<feature type="topological domain" description="Cytoplasmic" evidence="15">
    <location>
        <begin position="160"/>
        <end position="166"/>
    </location>
</feature>
<feature type="transmembrane region" description="Helical; Name=S5" evidence="2">
    <location>
        <begin position="167"/>
        <end position="190"/>
    </location>
</feature>
<feature type="topological domain" description="Extracellular" evidence="15">
    <location>
        <begin position="191"/>
        <end position="213"/>
    </location>
</feature>
<feature type="transmembrane region" description="Helical; Name=P-helix" evidence="2">
    <location>
        <begin position="214"/>
        <end position="248"/>
    </location>
</feature>
<feature type="transmembrane region" description="Helical; Name=S6" evidence="2">
    <location>
        <begin position="249"/>
        <end position="273"/>
    </location>
</feature>
<feature type="topological domain" description="Cytoplasmic" evidence="15">
    <location>
        <begin position="274"/>
        <end position="575"/>
    </location>
</feature>
<feature type="region of interest" description="Ion conduction pathway" evidence="2">
    <location>
        <begin position="164"/>
        <end position="272"/>
    </location>
</feature>
<feature type="region of interest" description="Selectivity filter" evidence="2">
    <location>
        <begin position="231"/>
        <end position="234"/>
    </location>
</feature>
<feature type="region of interest" description="C-linker" evidence="2">
    <location>
        <begin position="274"/>
        <end position="350"/>
    </location>
</feature>
<feature type="region of interest" description="Cyclic nucleotide-binding domain" evidence="2">
    <location>
        <begin position="354"/>
        <end position="474"/>
    </location>
</feature>
<feature type="region of interest" description="Disordered" evidence="5">
    <location>
        <begin position="537"/>
        <end position="575"/>
    </location>
</feature>
<feature type="coiled-coil region" evidence="2">
    <location>
        <begin position="493"/>
        <end position="547"/>
    </location>
</feature>
<feature type="short sequence motif" description="IQ-type" evidence="1">
    <location>
        <begin position="292"/>
        <end position="302"/>
    </location>
</feature>
<feature type="compositionally biased region" description="Acidic residues" evidence="5">
    <location>
        <begin position="544"/>
        <end position="554"/>
    </location>
</feature>
<feature type="binding site">
    <location>
        <begin position="348"/>
        <end position="471"/>
    </location>
    <ligand>
        <name>a nucleoside 3',5'-cyclic phosphate</name>
        <dbReference type="ChEBI" id="CHEBI:58464"/>
    </ligand>
</feature>
<feature type="binding site" evidence="2">
    <location>
        <position position="414"/>
    </location>
    <ligand>
        <name>3',5'-cyclic GMP</name>
        <dbReference type="ChEBI" id="CHEBI:57746"/>
    </ligand>
</feature>
<feature type="binding site" evidence="2">
    <location>
        <position position="417"/>
    </location>
    <ligand>
        <name>3',5'-cyclic GMP</name>
        <dbReference type="ChEBI" id="CHEBI:57746"/>
    </ligand>
</feature>
<feature type="binding site" evidence="2">
    <location>
        <position position="430"/>
    </location>
    <ligand>
        <name>3',5'-cyclic AMP</name>
        <dbReference type="ChEBI" id="CHEBI:58165"/>
    </ligand>
</feature>
<feature type="binding site" evidence="2">
    <location>
        <position position="430"/>
    </location>
    <ligand>
        <name>3',5'-cyclic GMP</name>
        <dbReference type="ChEBI" id="CHEBI:57746"/>
    </ligand>
</feature>
<feature type="binding site" evidence="2">
    <location>
        <position position="431"/>
    </location>
    <ligand>
        <name>3',5'-cyclic AMP</name>
        <dbReference type="ChEBI" id="CHEBI:58165"/>
    </ligand>
</feature>
<feature type="binding site" evidence="2">
    <location>
        <position position="431"/>
    </location>
    <ligand>
        <name>3',5'-cyclic GMP</name>
        <dbReference type="ChEBI" id="CHEBI:57746"/>
    </ligand>
</feature>
<feature type="site" description="Central gate" evidence="2">
    <location>
        <position position="258"/>
    </location>
</feature>
<feature type="mutagenesis site" description="Decreases the affnity of the channel for cGMP." evidence="9">
    <original>R</original>
    <variation>E</variation>
    <location>
        <position position="430"/>
    </location>
</feature>
<name>CNGA4_RAT</name>
<proteinExistence type="evidence at protein level"/>
<dbReference type="EMBL" id="U12623">
    <property type="protein sequence ID" value="AAA21464.1"/>
    <property type="molecule type" value="mRNA"/>
</dbReference>
<dbReference type="EMBL" id="U12425">
    <property type="protein sequence ID" value="AAA64748.1"/>
    <property type="molecule type" value="mRNA"/>
</dbReference>
<dbReference type="EMBL" id="AY564233">
    <property type="protein sequence ID" value="AAS87325.1"/>
    <property type="molecule type" value="Genomic_DNA"/>
</dbReference>
<dbReference type="EMBL" id="U76219">
    <property type="protein sequence ID" value="AAC17596.1"/>
    <property type="molecule type" value="Genomic_DNA"/>
</dbReference>
<dbReference type="PIR" id="I59327">
    <property type="entry name" value="I59327"/>
</dbReference>
<dbReference type="RefSeq" id="NP_445948.2">
    <property type="nucleotide sequence ID" value="NM_053496.2"/>
</dbReference>
<dbReference type="SMR" id="Q64359"/>
<dbReference type="DIP" id="DIP-61290N"/>
<dbReference type="FunCoup" id="Q64359">
    <property type="interactions" value="1008"/>
</dbReference>
<dbReference type="IntAct" id="Q64359">
    <property type="interactions" value="1"/>
</dbReference>
<dbReference type="STRING" id="10116.ENSRNOP00000023751"/>
<dbReference type="ChEMBL" id="CHEMBL4523657"/>
<dbReference type="PhosphoSitePlus" id="Q64359"/>
<dbReference type="PaxDb" id="10116-ENSRNOP00000023751"/>
<dbReference type="GeneID" id="85258"/>
<dbReference type="KEGG" id="rno:85258"/>
<dbReference type="UCSC" id="RGD:619844">
    <property type="organism name" value="rat"/>
</dbReference>
<dbReference type="AGR" id="RGD:619844"/>
<dbReference type="CTD" id="1262"/>
<dbReference type="RGD" id="619844">
    <property type="gene designation" value="Cnga4"/>
</dbReference>
<dbReference type="eggNOG" id="KOG0500">
    <property type="taxonomic scope" value="Eukaryota"/>
</dbReference>
<dbReference type="InParanoid" id="Q64359"/>
<dbReference type="OrthoDB" id="421226at2759"/>
<dbReference type="PhylomeDB" id="Q64359"/>
<dbReference type="Reactome" id="R-RNO-5620916">
    <property type="pathway name" value="VxPx cargo-targeting to cilium"/>
</dbReference>
<dbReference type="PRO" id="PR:Q64359"/>
<dbReference type="Proteomes" id="UP000002494">
    <property type="component" value="Unplaced"/>
</dbReference>
<dbReference type="GO" id="GO:0017071">
    <property type="term" value="C:intracellular cyclic nucleotide activated cation channel complex"/>
    <property type="evidence" value="ECO:0000314"/>
    <property type="project" value="RGD"/>
</dbReference>
<dbReference type="GO" id="GO:0098804">
    <property type="term" value="C:non-motile cilium membrane"/>
    <property type="evidence" value="ECO:0000314"/>
    <property type="project" value="UniProtKB"/>
</dbReference>
<dbReference type="GO" id="GO:0043204">
    <property type="term" value="C:perikaryon"/>
    <property type="evidence" value="ECO:0000314"/>
    <property type="project" value="RGD"/>
</dbReference>
<dbReference type="GO" id="GO:0005886">
    <property type="term" value="C:plasma membrane"/>
    <property type="evidence" value="ECO:0000318"/>
    <property type="project" value="GO_Central"/>
</dbReference>
<dbReference type="GO" id="GO:0030552">
    <property type="term" value="F:cAMP binding"/>
    <property type="evidence" value="ECO:0007669"/>
    <property type="project" value="UniProtKB-KW"/>
</dbReference>
<dbReference type="GO" id="GO:0030553">
    <property type="term" value="F:cGMP binding"/>
    <property type="evidence" value="ECO:0000314"/>
    <property type="project" value="RGD"/>
</dbReference>
<dbReference type="GO" id="GO:0005222">
    <property type="term" value="F:intracellularly cAMP-activated cation channel activity"/>
    <property type="evidence" value="ECO:0000314"/>
    <property type="project" value="UniProtKB"/>
</dbReference>
<dbReference type="GO" id="GO:0005223">
    <property type="term" value="F:intracellularly cGMP-activated cation channel activity"/>
    <property type="evidence" value="ECO:0000314"/>
    <property type="project" value="UniProtKB"/>
</dbReference>
<dbReference type="GO" id="GO:0005221">
    <property type="term" value="F:intracellularly cyclic nucleotide-activated monoatomic cation channel activity"/>
    <property type="evidence" value="ECO:0000314"/>
    <property type="project" value="RGD"/>
</dbReference>
<dbReference type="GO" id="GO:0044877">
    <property type="term" value="F:protein-containing complex binding"/>
    <property type="evidence" value="ECO:0000314"/>
    <property type="project" value="RGD"/>
</dbReference>
<dbReference type="GO" id="GO:0006816">
    <property type="term" value="P:calcium ion transport"/>
    <property type="evidence" value="ECO:0000314"/>
    <property type="project" value="UniProtKB"/>
</dbReference>
<dbReference type="GO" id="GO:0098655">
    <property type="term" value="P:monoatomic cation transmembrane transport"/>
    <property type="evidence" value="ECO:0000318"/>
    <property type="project" value="GO_Central"/>
</dbReference>
<dbReference type="GO" id="GO:0006813">
    <property type="term" value="P:potassium ion transport"/>
    <property type="evidence" value="ECO:0000314"/>
    <property type="project" value="UniProtKB"/>
</dbReference>
<dbReference type="GO" id="GO:0007608">
    <property type="term" value="P:sensory perception of smell"/>
    <property type="evidence" value="ECO:0000266"/>
    <property type="project" value="RGD"/>
</dbReference>
<dbReference type="GO" id="GO:0006814">
    <property type="term" value="P:sodium ion transport"/>
    <property type="evidence" value="ECO:0000314"/>
    <property type="project" value="UniProtKB"/>
</dbReference>
<dbReference type="CDD" id="cd00038">
    <property type="entry name" value="CAP_ED"/>
    <property type="match status" value="1"/>
</dbReference>
<dbReference type="FunFam" id="1.10.287.70:FF:000103">
    <property type="entry name" value="Cyclic nucleotide-gated cation channel alpha-4"/>
    <property type="match status" value="1"/>
</dbReference>
<dbReference type="FunFam" id="2.60.120.10:FF:000046">
    <property type="entry name" value="Cyclic nucleotide-gated cation channel alpha-4"/>
    <property type="match status" value="1"/>
</dbReference>
<dbReference type="FunFam" id="1.10.287.630:FF:000005">
    <property type="entry name" value="cyclic nucleotide-gated cation channel alpha-4"/>
    <property type="match status" value="1"/>
</dbReference>
<dbReference type="FunFam" id="1.20.5.300:FF:000005">
    <property type="entry name" value="cyclic nucleotide-gated cation channel alpha-4"/>
    <property type="match status" value="1"/>
</dbReference>
<dbReference type="Gene3D" id="1.10.287.70">
    <property type="match status" value="1"/>
</dbReference>
<dbReference type="Gene3D" id="1.20.5.300">
    <property type="match status" value="1"/>
</dbReference>
<dbReference type="Gene3D" id="1.10.287.630">
    <property type="entry name" value="Helix hairpin bin"/>
    <property type="match status" value="1"/>
</dbReference>
<dbReference type="Gene3D" id="2.60.120.10">
    <property type="entry name" value="Jelly Rolls"/>
    <property type="match status" value="1"/>
</dbReference>
<dbReference type="InterPro" id="IPR032406">
    <property type="entry name" value="CLZ_dom"/>
</dbReference>
<dbReference type="InterPro" id="IPR050866">
    <property type="entry name" value="CNG_cation_channel"/>
</dbReference>
<dbReference type="InterPro" id="IPR018488">
    <property type="entry name" value="cNMP-bd_CS"/>
</dbReference>
<dbReference type="InterPro" id="IPR000595">
    <property type="entry name" value="cNMP-bd_dom"/>
</dbReference>
<dbReference type="InterPro" id="IPR018490">
    <property type="entry name" value="cNMP-bd_dom_sf"/>
</dbReference>
<dbReference type="InterPro" id="IPR005821">
    <property type="entry name" value="Ion_trans_dom"/>
</dbReference>
<dbReference type="InterPro" id="IPR014710">
    <property type="entry name" value="RmlC-like_jellyroll"/>
</dbReference>
<dbReference type="PANTHER" id="PTHR45638:SF2">
    <property type="entry name" value="CYCLIC NUCLEOTIDE-GATED CATION CHANNEL ALPHA-4"/>
    <property type="match status" value="1"/>
</dbReference>
<dbReference type="PANTHER" id="PTHR45638">
    <property type="entry name" value="CYCLIC NUCLEOTIDE-GATED CATION CHANNEL SUBUNIT A"/>
    <property type="match status" value="1"/>
</dbReference>
<dbReference type="Pfam" id="PF16526">
    <property type="entry name" value="CLZ"/>
    <property type="match status" value="1"/>
</dbReference>
<dbReference type="Pfam" id="PF00027">
    <property type="entry name" value="cNMP_binding"/>
    <property type="match status" value="1"/>
</dbReference>
<dbReference type="Pfam" id="PF00520">
    <property type="entry name" value="Ion_trans"/>
    <property type="match status" value="1"/>
</dbReference>
<dbReference type="SMART" id="SM00100">
    <property type="entry name" value="cNMP"/>
    <property type="match status" value="1"/>
</dbReference>
<dbReference type="SUPFAM" id="SSF51206">
    <property type="entry name" value="cAMP-binding domain-like"/>
    <property type="match status" value="1"/>
</dbReference>
<dbReference type="SUPFAM" id="SSF81324">
    <property type="entry name" value="Voltage-gated potassium channels"/>
    <property type="match status" value="1"/>
</dbReference>
<dbReference type="PROSITE" id="PS00888">
    <property type="entry name" value="CNMP_BINDING_1"/>
    <property type="match status" value="1"/>
</dbReference>
<dbReference type="PROSITE" id="PS00889">
    <property type="entry name" value="CNMP_BINDING_2"/>
    <property type="match status" value="1"/>
</dbReference>
<dbReference type="PROSITE" id="PS50042">
    <property type="entry name" value="CNMP_BINDING_3"/>
    <property type="match status" value="1"/>
</dbReference>
<accession>Q64359</accession>
<accession>Q6Q2I4</accession>
<protein>
    <recommendedName>
        <fullName>Cyclic nucleotide-gated channel alpha-4</fullName>
        <shortName>CNG channel alpha-4</shortName>
        <shortName evidence="14">CNGa4</shortName>
    </recommendedName>
    <alternativeName>
        <fullName>Olfactory cyclic nucleotide-gated channel subunit 2</fullName>
        <shortName evidence="14">OCNC2</shortName>
    </alternativeName>
</protein>
<evidence type="ECO:0000250" key="1"/>
<evidence type="ECO:0000250" key="2">
    <source>
        <dbReference type="UniProtKB" id="P29973"/>
    </source>
</evidence>
<evidence type="ECO:0000250" key="3">
    <source>
        <dbReference type="UniProtKB" id="Q00194"/>
    </source>
</evidence>
<evidence type="ECO:0000255" key="4"/>
<evidence type="ECO:0000256" key="5">
    <source>
        <dbReference type="SAM" id="MobiDB-lite"/>
    </source>
</evidence>
<evidence type="ECO:0000269" key="6">
    <source>
    </source>
</evidence>
<evidence type="ECO:0000269" key="7">
    <source>
    </source>
</evidence>
<evidence type="ECO:0000269" key="8">
    <source>
    </source>
</evidence>
<evidence type="ECO:0000269" key="9">
    <source>
    </source>
</evidence>
<evidence type="ECO:0000269" key="10">
    <source>
    </source>
</evidence>
<evidence type="ECO:0000269" key="11">
    <source>
    </source>
</evidence>
<evidence type="ECO:0000269" key="12">
    <source>
    </source>
</evidence>
<evidence type="ECO:0000269" key="13">
    <source>
    </source>
</evidence>
<evidence type="ECO:0000303" key="14">
    <source>
    </source>
</evidence>
<evidence type="ECO:0000305" key="15"/>
<evidence type="ECO:0000305" key="16">
    <source>
    </source>
</evidence>
<evidence type="ECO:0000312" key="17">
    <source>
        <dbReference type="RGD" id="619844"/>
    </source>
</evidence>
<reference key="1">
    <citation type="journal article" date="1994" name="Proc. Natl. Acad. Sci. U.S.A.">
        <title>Heteromeric olfactory cyclic nucleotide-gated channels: a subunit that confers increased sensitivity to cAMP.</title>
        <authorList>
            <person name="Bradley J."/>
            <person name="Li J."/>
            <person name="Davidson N."/>
            <person name="Lester H.A."/>
            <person name="Zinn K."/>
        </authorList>
    </citation>
    <scope>NUCLEOTIDE SEQUENCE [MRNA]</scope>
    <scope>FUNCTION</scope>
    <scope>TISSUE SPECIFICITY</scope>
    <source>
        <strain>Sprague-Dawley</strain>
    </source>
</reference>
<reference key="2">
    <citation type="journal article" date="1994" name="Neuron">
        <title>A second subunit of the olfactory cyclic nucleotide-gated channel confers high sensitivity to cAMP.</title>
        <authorList>
            <person name="Liman E.R."/>
            <person name="Buck L.B."/>
        </authorList>
    </citation>
    <scope>NUCLEOTIDE SEQUENCE [MRNA]</scope>
    <scope>FUNCTION</scope>
    <scope>TISSUE SPECIFICITY</scope>
    <source>
        <tissue>Olfactory neuroepithelium</tissue>
    </source>
</reference>
<reference key="3">
    <citation type="submission" date="2004-03" db="EMBL/GenBank/DDBJ databases">
        <title>Characterization and functional expression of cyclic nucleotide-gated channels in rat pituitary gonadotrophs.</title>
        <authorList>
            <person name="Lozach A."/>
            <person name="Castel H.L.N."/>
            <person name="Garrel G."/>
            <person name="Vaudry H."/>
            <person name="Counis R."/>
        </authorList>
    </citation>
    <scope>NUCLEOTIDE SEQUENCE [GENOMIC DNA] OF 3-191</scope>
    <source>
        <strain>Sprague-Dawley</strain>
    </source>
</reference>
<reference key="4">
    <citation type="submission" date="1996-12" db="EMBL/GenBank/DDBJ databases">
        <authorList>
            <person name="Bradley J."/>
            <person name="Zhang Y."/>
            <person name="Bakin R."/>
            <person name="Lester H.A."/>
            <person name="Ronnett G."/>
            <person name="Zinn K."/>
        </authorList>
    </citation>
    <scope>NUCLEOTIDE SEQUENCE [GENOMIC DNA] OF 7-35</scope>
    <source>
        <strain>Sprague-Dawley</strain>
    </source>
</reference>
<reference key="5">
    <citation type="journal article" date="1997" name="Neuron">
        <title>Beta subunits of the olfactory cyclic nucleotide-gated channel form a nitric oxide activated Ca2+ channel.</title>
        <authorList>
            <person name="Broillet M.C."/>
            <person name="Firestein S."/>
        </authorList>
    </citation>
    <scope>FUNCTION</scope>
    <scope>TRANSPORTER ACTIVITY</scope>
    <scope>ACTIVITY REGULATION</scope>
    <scope>SUBUNIT</scope>
</reference>
<reference key="6">
    <citation type="journal article" date="1999" name="EMBO J.">
        <title>Ca2+ permeation in cyclic nucleotide-gated channels.</title>
        <authorList>
            <person name="Dzeja C."/>
            <person name="Hagen V."/>
            <person name="Kaupp U.B."/>
            <person name="Frings S."/>
        </authorList>
    </citation>
    <scope>FUNCTION</scope>
    <scope>TRANSPORTER ACTIVITY</scope>
</reference>
<reference key="7">
    <citation type="journal article" date="1999" name="J. Neurosci.">
        <title>The native rat olfactory cyclic nucleotide-gated channel is composed of three distinct subunits.</title>
        <authorList>
            <person name="Boenigk W."/>
            <person name="Bradley J."/>
            <person name="Mueller F."/>
            <person name="Sesti F."/>
            <person name="Boekhoff I."/>
            <person name="Ronnett G.V."/>
            <person name="Kaupp U.B."/>
            <person name="Frings S."/>
        </authorList>
    </citation>
    <scope>FUNCTION</scope>
    <scope>TRANSPORTER ACTIVITY</scope>
    <scope>SUBCELLULAR LOCATION</scope>
    <scope>TISSUE SPECIFICITY</scope>
    <scope>GLYCOSYLATION</scope>
</reference>
<reference key="8">
    <citation type="journal article" date="2001" name="Science">
        <title>Nomenclature for ion channel subunits.</title>
        <authorList>
            <person name="Bradley J."/>
            <person name="Frings S."/>
            <person name="Yau K.W."/>
            <person name="Reed R."/>
        </authorList>
    </citation>
    <scope>NOMENCLATURE</scope>
</reference>
<reference key="9">
    <citation type="journal article" date="2004" name="Nat. Neurosci.">
        <title>Calmodulin permanently associates with rat olfactory CNG channels under native conditions.</title>
        <authorList>
            <person name="Bradley J."/>
            <person name="Boenigk W."/>
            <person name="Yau K.-W."/>
            <person name="Frings S."/>
        </authorList>
    </citation>
    <scope>ACTIVITY REGULATION</scope>
</reference>
<reference key="10">
    <citation type="journal article" date="2004" name="Neuron">
        <title>Stoichiometry and assembly of olfactory cyclic nucleotide-gated channels.</title>
        <authorList>
            <person name="Zheng J."/>
            <person name="Zagotta W.N."/>
        </authorList>
    </citation>
    <scope>FUNCTION</scope>
    <scope>SUBUNIT</scope>
    <scope>ACTIVITY REGULATION</scope>
</reference>
<reference key="11">
    <citation type="journal article" date="2016" name="Sci. Rep.">
        <title>Deciphering the function of the CNGB1b subunit in olfactory CNG channels.</title>
        <authorList>
            <person name="Nache V."/>
            <person name="Wongsamitkul N."/>
            <person name="Kusch J."/>
            <person name="Zimmer T."/>
            <person name="Schwede F."/>
            <person name="Benndorf K."/>
        </authorList>
    </citation>
    <scope>FUNCTION</scope>
    <scope>SUBUNIT</scope>
    <scope>MUTAGENESIS OF ARG-430</scope>
</reference>
<organism>
    <name type="scientific">Rattus norvegicus</name>
    <name type="common">Rat</name>
    <dbReference type="NCBI Taxonomy" id="10116"/>
    <lineage>
        <taxon>Eukaryota</taxon>
        <taxon>Metazoa</taxon>
        <taxon>Chordata</taxon>
        <taxon>Craniata</taxon>
        <taxon>Vertebrata</taxon>
        <taxon>Euteleostomi</taxon>
        <taxon>Mammalia</taxon>
        <taxon>Eutheria</taxon>
        <taxon>Euarchontoglires</taxon>
        <taxon>Glires</taxon>
        <taxon>Rodentia</taxon>
        <taxon>Myomorpha</taxon>
        <taxon>Muroidea</taxon>
        <taxon>Muridae</taxon>
        <taxon>Murinae</taxon>
        <taxon>Rattus</taxon>
    </lineage>
</organism>
<gene>
    <name evidence="14 17" type="primary">Cnga4</name>
    <name type="synonym">Cgn2</name>
</gene>
<comment type="function">
    <text evidence="6 7 9 10 11 12 13">Pore-forming subunit of the olfactory cyclic nucleotide-gated channel. Operates in the cilia of olfactory sensory neurons where chemical stimulation of the odorant is converted to an electrical signal. Mediates odorant-induced cAMP-dependent Ca(2+) influx triggering neuron depolarization. The rise of intracellular Ca(2+) levels potentiates the olfactory response by activating Ca(2+)-dependent Cl(-) channels, but it also serves as a negative feedback signal to desensitize the channel for rapid adaptation to odorants. Conducts cAMP- and cGMP-gated ion currents, with permeability for monovalent and divalent cations (PubMed:10377344, PubMed:15134638, PubMed:27405959, PubMed:7522325, PubMed:7522482, PubMed:9878057). May conduct nitric oxide-gated Ca(2+) currents relevant to neurons of vomeronasal organ, a system involved in the perception of pheromones (PubMed:9208862).</text>
</comment>
<comment type="catalytic activity">
    <reaction evidence="12 13">
        <text>Ca(2+)(in) = Ca(2+)(out)</text>
        <dbReference type="Rhea" id="RHEA:29671"/>
        <dbReference type="ChEBI" id="CHEBI:29108"/>
    </reaction>
</comment>
<comment type="catalytic activity">
    <reaction evidence="6">
        <text>Na(+)(in) = Na(+)(out)</text>
        <dbReference type="Rhea" id="RHEA:34963"/>
        <dbReference type="ChEBI" id="CHEBI:29101"/>
    </reaction>
</comment>
<comment type="catalytic activity">
    <reaction evidence="6">
        <text>K(+)(in) = K(+)(out)</text>
        <dbReference type="Rhea" id="RHEA:29463"/>
        <dbReference type="ChEBI" id="CHEBI:29103"/>
    </reaction>
</comment>
<comment type="catalytic activity">
    <reaction evidence="3">
        <text>NH4(+)(in) = NH4(+)(out)</text>
        <dbReference type="Rhea" id="RHEA:28747"/>
        <dbReference type="ChEBI" id="CHEBI:28938"/>
    </reaction>
</comment>
<comment type="catalytic activity">
    <reaction evidence="3">
        <text>Rb(+)(in) = Rb(+)(out)</text>
        <dbReference type="Rhea" id="RHEA:78547"/>
        <dbReference type="ChEBI" id="CHEBI:49847"/>
    </reaction>
</comment>
<comment type="catalytic activity">
    <reaction evidence="3">
        <text>Li(+)(in) = Li(+)(out)</text>
        <dbReference type="Rhea" id="RHEA:78551"/>
        <dbReference type="ChEBI" id="CHEBI:49713"/>
    </reaction>
</comment>
<comment type="catalytic activity">
    <reaction evidence="3">
        <text>Cs(+)(in) = Cs(+)(out)</text>
        <dbReference type="Rhea" id="RHEA:78555"/>
        <dbReference type="ChEBI" id="CHEBI:49547"/>
    </reaction>
</comment>
<comment type="activity regulation">
    <text evidence="7 8 12">Ca(2+)-calmodulin exerts its inhibitory effect in cAMP sensitivity by binding to IQ-like motif of CNGA4 and preferably binds to the channel in the closed state. Inhibition by PIP3 of the CNG channel probably occurs via CGNA2 binding. Ca(2+) currents are inhibited by pimozide, an L-type Ca(2+) channel blocker.</text>
</comment>
<comment type="subunit">
    <text evidence="7 9 12">The olfactory cyclic nucleotide-gated channel is an heterotetramer composed of CNGA2, CNGA4 and CNGB1b subunits with 2:1:1 stoichiometry (PubMed:15134638, PubMed:27405959). May form homomeric channels gated by nitric oxide (PubMed:9208862).</text>
</comment>
<comment type="subcellular location">
    <subcellularLocation>
        <location evidence="16">Cell projection</location>
        <location evidence="16">Cilium membrane</location>
        <topology evidence="4">Multi-pass membrane protein</topology>
    </subcellularLocation>
</comment>
<comment type="tissue specificity">
    <text evidence="6 10 11">Olfactory neurons. Expressed in olfactory sensory cilia (at protein level).</text>
</comment>
<comment type="domain">
    <text evidence="1">The C-terminal coiled-coil domain mediates trimerization of CNGA subunits.</text>
</comment>
<comment type="PTM">
    <text evidence="6">N-glycosylated.</text>
</comment>
<comment type="similarity">
    <text evidence="15">Belongs to the cyclic nucleotide-gated cation channel (TC 1.A.1.5) family. CNGA4 subfamily.</text>
</comment>
<keyword id="KW-0114">cAMP</keyword>
<keyword id="KW-0116">cAMP-binding</keyword>
<keyword id="KW-1003">Cell membrane</keyword>
<keyword id="KW-0966">Cell projection</keyword>
<keyword id="KW-0175">Coiled coil</keyword>
<keyword id="KW-0407">Ion channel</keyword>
<keyword id="KW-0406">Ion transport</keyword>
<keyword id="KW-1071">Ligand-gated ion channel</keyword>
<keyword id="KW-0472">Membrane</keyword>
<keyword id="KW-0547">Nucleotide-binding</keyword>
<keyword id="KW-0552">Olfaction</keyword>
<keyword id="KW-1185">Reference proteome</keyword>
<keyword id="KW-0716">Sensory transduction</keyword>
<keyword id="KW-0812">Transmembrane</keyword>
<keyword id="KW-1133">Transmembrane helix</keyword>
<keyword id="KW-0813">Transport</keyword>
<sequence>MSQDGKVKTTESTPPAPTKARKWLPVLDPSGDYYYWWLNTMVFPIMYNLIIVVCRACFPDLQHSYLVAWFVLDYTSDLLYLLDIGVRFHTGFLEQGILVVDKGMIASRYVRTWSFLLDLASLVPTDAAYVQLGPHIPTLRLNRFLRVPRLFEAFDRTETRTAYPNAFRIAKLMLYIFVVIHWNSCLYFALSRYLGFGRDAWVYPDPAQPGFERLRRQYLYSFYFSTLILTTVGDTPLPDREEEYLFMVGDFLLAVMGFATIMGSMSSVIYNMNTADAAFYPDHALVKKYMKLQHVNKRLERRVIDWYQHLQINKKMTNEVAILQHLPERLRAEVAVSVHLSTLSRVQIFQNCEASLLEELVLKLQPQTYSPGEYVCRKGDIGREMYIIREGQLAVVADDGVTQYAVLGAGLYFGEISIINIKGNMSGNRRTANIKSLGYSDLFCLSKEDLREVLSEYPQAQAVMEEKGREILLKMNKLDVNAEAAEIALQEATESRLKGLDQQLDDLQTKFARLLAELESSALKIAYRIERLEWQTREWPMPEDMGEADDEAEPGEGTSKDGEGKAGQAGPSGIE</sequence>